<keyword id="KW-0963">Cytoplasm</keyword>
<keyword id="KW-0324">Glycolysis</keyword>
<keyword id="KW-0456">Lyase</keyword>
<keyword id="KW-0460">Magnesium</keyword>
<keyword id="KW-0479">Metal-binding</keyword>
<keyword id="KW-0964">Secreted</keyword>
<protein>
    <recommendedName>
        <fullName evidence="1">Enolase</fullName>
        <ecNumber evidence="1">4.2.1.11</ecNumber>
    </recommendedName>
    <alternativeName>
        <fullName evidence="1">2-phospho-D-glycerate hydro-lyase</fullName>
    </alternativeName>
    <alternativeName>
        <fullName evidence="1">2-phosphoglycerate dehydratase</fullName>
    </alternativeName>
</protein>
<accession>Q3M7B2</accession>
<sequence>MSNIVDTAIEAIVAREILDSRGRPTIEAEVHLLSGAVGLAQVPSGASTGTFEAHELRDKDKSRYGGKGVLKAVHNVNEVLAPKLIDLDAINQELIDRTMIALDGSGNKSNLGANAILAVSLAAARAGAASLGIPLYRYLGGPLANLLPVPLMNVINGGAHAANNVDFQEFMIVPVGATSFREALRWGAEVFATLSEVLHDKGLLTGVGDEGGFAPNLESNQVALELLVAAIEKAGYKPGEQVALALDVAASEFYKEGQYVYDGRPHAPTEFIDYLGQLVDQYPIVSIEDGLHEEDWQNWQLLTQKVGSRVQLVGDDLFVTNATRLQKGIQEKAGNAILIKLNQIGSLTETLETIDLGTRNGFRSVISHRSGETEDTTIADLAVATRAGQIKTGSLCRSERVAKYNRLLRIEDELGDRAVYAGAVGLGPK</sequence>
<evidence type="ECO:0000255" key="1">
    <source>
        <dbReference type="HAMAP-Rule" id="MF_00318"/>
    </source>
</evidence>
<reference key="1">
    <citation type="journal article" date="2014" name="Stand. Genomic Sci.">
        <title>Complete genome sequence of Anabaena variabilis ATCC 29413.</title>
        <authorList>
            <person name="Thiel T."/>
            <person name="Pratte B.S."/>
            <person name="Zhong J."/>
            <person name="Goodwin L."/>
            <person name="Copeland A."/>
            <person name="Lucas S."/>
            <person name="Han C."/>
            <person name="Pitluck S."/>
            <person name="Land M.L."/>
            <person name="Kyrpides N.C."/>
            <person name="Woyke T."/>
        </authorList>
    </citation>
    <scope>NUCLEOTIDE SEQUENCE [LARGE SCALE GENOMIC DNA]</scope>
    <source>
        <strain>ATCC 29413 / PCC 7937</strain>
    </source>
</reference>
<dbReference type="EC" id="4.2.1.11" evidence="1"/>
<dbReference type="EMBL" id="CP000117">
    <property type="protein sequence ID" value="ABA23124.1"/>
    <property type="molecule type" value="Genomic_DNA"/>
</dbReference>
<dbReference type="SMR" id="Q3M7B2"/>
<dbReference type="STRING" id="240292.Ava_3517"/>
<dbReference type="KEGG" id="ava:Ava_3517"/>
<dbReference type="eggNOG" id="COG0148">
    <property type="taxonomic scope" value="Bacteria"/>
</dbReference>
<dbReference type="HOGENOM" id="CLU_031223_2_1_3"/>
<dbReference type="UniPathway" id="UPA00109">
    <property type="reaction ID" value="UER00187"/>
</dbReference>
<dbReference type="Proteomes" id="UP000002533">
    <property type="component" value="Chromosome"/>
</dbReference>
<dbReference type="GO" id="GO:0009986">
    <property type="term" value="C:cell surface"/>
    <property type="evidence" value="ECO:0007669"/>
    <property type="project" value="UniProtKB-SubCell"/>
</dbReference>
<dbReference type="GO" id="GO:0005576">
    <property type="term" value="C:extracellular region"/>
    <property type="evidence" value="ECO:0007669"/>
    <property type="project" value="UniProtKB-SubCell"/>
</dbReference>
<dbReference type="GO" id="GO:0000015">
    <property type="term" value="C:phosphopyruvate hydratase complex"/>
    <property type="evidence" value="ECO:0007669"/>
    <property type="project" value="InterPro"/>
</dbReference>
<dbReference type="GO" id="GO:0000287">
    <property type="term" value="F:magnesium ion binding"/>
    <property type="evidence" value="ECO:0007669"/>
    <property type="project" value="UniProtKB-UniRule"/>
</dbReference>
<dbReference type="GO" id="GO:0004634">
    <property type="term" value="F:phosphopyruvate hydratase activity"/>
    <property type="evidence" value="ECO:0007669"/>
    <property type="project" value="UniProtKB-UniRule"/>
</dbReference>
<dbReference type="GO" id="GO:0006096">
    <property type="term" value="P:glycolytic process"/>
    <property type="evidence" value="ECO:0007669"/>
    <property type="project" value="UniProtKB-UniRule"/>
</dbReference>
<dbReference type="CDD" id="cd03313">
    <property type="entry name" value="enolase"/>
    <property type="match status" value="1"/>
</dbReference>
<dbReference type="FunFam" id="3.20.20.120:FF:000001">
    <property type="entry name" value="Enolase"/>
    <property type="match status" value="1"/>
</dbReference>
<dbReference type="FunFam" id="3.30.390.10:FF:000001">
    <property type="entry name" value="Enolase"/>
    <property type="match status" value="1"/>
</dbReference>
<dbReference type="Gene3D" id="3.20.20.120">
    <property type="entry name" value="Enolase-like C-terminal domain"/>
    <property type="match status" value="1"/>
</dbReference>
<dbReference type="Gene3D" id="3.30.390.10">
    <property type="entry name" value="Enolase-like, N-terminal domain"/>
    <property type="match status" value="1"/>
</dbReference>
<dbReference type="HAMAP" id="MF_00318">
    <property type="entry name" value="Enolase"/>
    <property type="match status" value="1"/>
</dbReference>
<dbReference type="InterPro" id="IPR000941">
    <property type="entry name" value="Enolase"/>
</dbReference>
<dbReference type="InterPro" id="IPR036849">
    <property type="entry name" value="Enolase-like_C_sf"/>
</dbReference>
<dbReference type="InterPro" id="IPR029017">
    <property type="entry name" value="Enolase-like_N"/>
</dbReference>
<dbReference type="InterPro" id="IPR020810">
    <property type="entry name" value="Enolase_C"/>
</dbReference>
<dbReference type="InterPro" id="IPR020809">
    <property type="entry name" value="Enolase_CS"/>
</dbReference>
<dbReference type="InterPro" id="IPR020811">
    <property type="entry name" value="Enolase_N"/>
</dbReference>
<dbReference type="NCBIfam" id="TIGR01060">
    <property type="entry name" value="eno"/>
    <property type="match status" value="1"/>
</dbReference>
<dbReference type="PANTHER" id="PTHR11902">
    <property type="entry name" value="ENOLASE"/>
    <property type="match status" value="1"/>
</dbReference>
<dbReference type="PANTHER" id="PTHR11902:SF1">
    <property type="entry name" value="ENOLASE"/>
    <property type="match status" value="1"/>
</dbReference>
<dbReference type="Pfam" id="PF00113">
    <property type="entry name" value="Enolase_C"/>
    <property type="match status" value="1"/>
</dbReference>
<dbReference type="Pfam" id="PF03952">
    <property type="entry name" value="Enolase_N"/>
    <property type="match status" value="1"/>
</dbReference>
<dbReference type="PIRSF" id="PIRSF001400">
    <property type="entry name" value="Enolase"/>
    <property type="match status" value="1"/>
</dbReference>
<dbReference type="PRINTS" id="PR00148">
    <property type="entry name" value="ENOLASE"/>
</dbReference>
<dbReference type="SFLD" id="SFLDF00002">
    <property type="entry name" value="enolase"/>
    <property type="match status" value="1"/>
</dbReference>
<dbReference type="SFLD" id="SFLDG00178">
    <property type="entry name" value="enolase"/>
    <property type="match status" value="1"/>
</dbReference>
<dbReference type="SMART" id="SM01192">
    <property type="entry name" value="Enolase_C"/>
    <property type="match status" value="1"/>
</dbReference>
<dbReference type="SMART" id="SM01193">
    <property type="entry name" value="Enolase_N"/>
    <property type="match status" value="1"/>
</dbReference>
<dbReference type="SUPFAM" id="SSF51604">
    <property type="entry name" value="Enolase C-terminal domain-like"/>
    <property type="match status" value="1"/>
</dbReference>
<dbReference type="SUPFAM" id="SSF54826">
    <property type="entry name" value="Enolase N-terminal domain-like"/>
    <property type="match status" value="1"/>
</dbReference>
<dbReference type="PROSITE" id="PS00164">
    <property type="entry name" value="ENOLASE"/>
    <property type="match status" value="1"/>
</dbReference>
<comment type="function">
    <text evidence="1">Catalyzes the reversible conversion of 2-phosphoglycerate (2-PG) into phosphoenolpyruvate (PEP). It is essential for the degradation of carbohydrates via glycolysis.</text>
</comment>
<comment type="catalytic activity">
    <reaction evidence="1">
        <text>(2R)-2-phosphoglycerate = phosphoenolpyruvate + H2O</text>
        <dbReference type="Rhea" id="RHEA:10164"/>
        <dbReference type="ChEBI" id="CHEBI:15377"/>
        <dbReference type="ChEBI" id="CHEBI:58289"/>
        <dbReference type="ChEBI" id="CHEBI:58702"/>
        <dbReference type="EC" id="4.2.1.11"/>
    </reaction>
</comment>
<comment type="cofactor">
    <cofactor evidence="1">
        <name>Mg(2+)</name>
        <dbReference type="ChEBI" id="CHEBI:18420"/>
    </cofactor>
    <text evidence="1">Binds a second Mg(2+) ion via substrate during catalysis.</text>
</comment>
<comment type="pathway">
    <text evidence="1">Carbohydrate degradation; glycolysis; pyruvate from D-glyceraldehyde 3-phosphate: step 4/5.</text>
</comment>
<comment type="subcellular location">
    <subcellularLocation>
        <location evidence="1">Cytoplasm</location>
    </subcellularLocation>
    <subcellularLocation>
        <location evidence="1">Secreted</location>
    </subcellularLocation>
    <subcellularLocation>
        <location evidence="1">Cell surface</location>
    </subcellularLocation>
    <text evidence="1">Fractions of enolase are present in both the cytoplasm and on the cell surface.</text>
</comment>
<comment type="similarity">
    <text evidence="1">Belongs to the enolase family.</text>
</comment>
<feature type="chain" id="PRO_0000266994" description="Enolase">
    <location>
        <begin position="1"/>
        <end position="429"/>
    </location>
</feature>
<feature type="active site" description="Proton donor" evidence="1">
    <location>
        <position position="210"/>
    </location>
</feature>
<feature type="active site" description="Proton acceptor" evidence="1">
    <location>
        <position position="340"/>
    </location>
</feature>
<feature type="binding site" evidence="1">
    <location>
        <position position="168"/>
    </location>
    <ligand>
        <name>(2R)-2-phosphoglycerate</name>
        <dbReference type="ChEBI" id="CHEBI:58289"/>
    </ligand>
</feature>
<feature type="binding site" evidence="1">
    <location>
        <position position="247"/>
    </location>
    <ligand>
        <name>Mg(2+)</name>
        <dbReference type="ChEBI" id="CHEBI:18420"/>
    </ligand>
</feature>
<feature type="binding site" evidence="1">
    <location>
        <position position="288"/>
    </location>
    <ligand>
        <name>Mg(2+)</name>
        <dbReference type="ChEBI" id="CHEBI:18420"/>
    </ligand>
</feature>
<feature type="binding site" evidence="1">
    <location>
        <position position="315"/>
    </location>
    <ligand>
        <name>Mg(2+)</name>
        <dbReference type="ChEBI" id="CHEBI:18420"/>
    </ligand>
</feature>
<feature type="binding site" evidence="1">
    <location>
        <position position="340"/>
    </location>
    <ligand>
        <name>(2R)-2-phosphoglycerate</name>
        <dbReference type="ChEBI" id="CHEBI:58289"/>
    </ligand>
</feature>
<feature type="binding site" evidence="1">
    <location>
        <position position="369"/>
    </location>
    <ligand>
        <name>(2R)-2-phosphoglycerate</name>
        <dbReference type="ChEBI" id="CHEBI:58289"/>
    </ligand>
</feature>
<feature type="binding site" evidence="1">
    <location>
        <position position="370"/>
    </location>
    <ligand>
        <name>(2R)-2-phosphoglycerate</name>
        <dbReference type="ChEBI" id="CHEBI:58289"/>
    </ligand>
</feature>
<feature type="binding site" evidence="1">
    <location>
        <position position="391"/>
    </location>
    <ligand>
        <name>(2R)-2-phosphoglycerate</name>
        <dbReference type="ChEBI" id="CHEBI:58289"/>
    </ligand>
</feature>
<name>ENO_TRIV2</name>
<gene>
    <name evidence="1" type="primary">eno</name>
    <name type="ordered locus">Ava_3517</name>
</gene>
<proteinExistence type="inferred from homology"/>
<organism>
    <name type="scientific">Trichormus variabilis (strain ATCC 29413 / PCC 7937)</name>
    <name type="common">Anabaena variabilis</name>
    <dbReference type="NCBI Taxonomy" id="240292"/>
    <lineage>
        <taxon>Bacteria</taxon>
        <taxon>Bacillati</taxon>
        <taxon>Cyanobacteriota</taxon>
        <taxon>Cyanophyceae</taxon>
        <taxon>Nostocales</taxon>
        <taxon>Nostocaceae</taxon>
        <taxon>Trichormus</taxon>
    </lineage>
</organism>